<evidence type="ECO:0000255" key="1">
    <source>
        <dbReference type="HAMAP-Rule" id="MF_00245"/>
    </source>
</evidence>
<dbReference type="EMBL" id="BX571857">
    <property type="protein sequence ID" value="CAG42947.1"/>
    <property type="molecule type" value="Genomic_DNA"/>
</dbReference>
<dbReference type="RefSeq" id="WP_000531320.1">
    <property type="nucleotide sequence ID" value="NC_002953.3"/>
</dbReference>
<dbReference type="SMR" id="Q6G9X7"/>
<dbReference type="KEGG" id="sas:SAS1170"/>
<dbReference type="HOGENOM" id="CLU_129218_1_1_9"/>
<dbReference type="Gene3D" id="1.10.10.10">
    <property type="entry name" value="Winged helix-like DNA-binding domain superfamily/Winged helix DNA-binding domain"/>
    <property type="match status" value="1"/>
</dbReference>
<dbReference type="HAMAP" id="MF_00245">
    <property type="entry name" value="UPF0122"/>
    <property type="match status" value="1"/>
</dbReference>
<dbReference type="InterPro" id="IPR013324">
    <property type="entry name" value="RNA_pol_sigma_r3/r4-like"/>
</dbReference>
<dbReference type="InterPro" id="IPR007394">
    <property type="entry name" value="UPF0122"/>
</dbReference>
<dbReference type="InterPro" id="IPR054831">
    <property type="entry name" value="UPF0122_fam_protein"/>
</dbReference>
<dbReference type="InterPro" id="IPR036388">
    <property type="entry name" value="WH-like_DNA-bd_sf"/>
</dbReference>
<dbReference type="NCBIfam" id="NF001067">
    <property type="entry name" value="PRK00118.1-2"/>
    <property type="match status" value="1"/>
</dbReference>
<dbReference type="NCBIfam" id="NF001070">
    <property type="entry name" value="PRK00118.1-6"/>
    <property type="match status" value="1"/>
</dbReference>
<dbReference type="NCBIfam" id="NF045758">
    <property type="entry name" value="YlxM"/>
    <property type="match status" value="1"/>
</dbReference>
<dbReference type="PANTHER" id="PTHR40083">
    <property type="entry name" value="UPF0122 PROTEIN CBO2450/CLC_2298"/>
    <property type="match status" value="1"/>
</dbReference>
<dbReference type="PANTHER" id="PTHR40083:SF1">
    <property type="entry name" value="UPF0122 PROTEIN YLXM"/>
    <property type="match status" value="1"/>
</dbReference>
<dbReference type="Pfam" id="PF04297">
    <property type="entry name" value="UPF0122"/>
    <property type="match status" value="1"/>
</dbReference>
<dbReference type="SUPFAM" id="SSF88659">
    <property type="entry name" value="Sigma3 and sigma4 domains of RNA polymerase sigma factors"/>
    <property type="match status" value="1"/>
</dbReference>
<protein>
    <recommendedName>
        <fullName evidence="1">UPF0122 protein SAS1170</fullName>
    </recommendedName>
</protein>
<organism>
    <name type="scientific">Staphylococcus aureus (strain MSSA476)</name>
    <dbReference type="NCBI Taxonomy" id="282459"/>
    <lineage>
        <taxon>Bacteria</taxon>
        <taxon>Bacillati</taxon>
        <taxon>Bacillota</taxon>
        <taxon>Bacilli</taxon>
        <taxon>Bacillales</taxon>
        <taxon>Staphylococcaceae</taxon>
        <taxon>Staphylococcus</taxon>
    </lineage>
</organism>
<reference key="1">
    <citation type="journal article" date="2004" name="Proc. Natl. Acad. Sci. U.S.A.">
        <title>Complete genomes of two clinical Staphylococcus aureus strains: evidence for the rapid evolution of virulence and drug resistance.</title>
        <authorList>
            <person name="Holden M.T.G."/>
            <person name="Feil E.J."/>
            <person name="Lindsay J.A."/>
            <person name="Peacock S.J."/>
            <person name="Day N.P.J."/>
            <person name="Enright M.C."/>
            <person name="Foster T.J."/>
            <person name="Moore C.E."/>
            <person name="Hurst L."/>
            <person name="Atkin R."/>
            <person name="Barron A."/>
            <person name="Bason N."/>
            <person name="Bentley S.D."/>
            <person name="Chillingworth C."/>
            <person name="Chillingworth T."/>
            <person name="Churcher C."/>
            <person name="Clark L."/>
            <person name="Corton C."/>
            <person name="Cronin A."/>
            <person name="Doggett J."/>
            <person name="Dowd L."/>
            <person name="Feltwell T."/>
            <person name="Hance Z."/>
            <person name="Harris B."/>
            <person name="Hauser H."/>
            <person name="Holroyd S."/>
            <person name="Jagels K."/>
            <person name="James K.D."/>
            <person name="Lennard N."/>
            <person name="Line A."/>
            <person name="Mayes R."/>
            <person name="Moule S."/>
            <person name="Mungall K."/>
            <person name="Ormond D."/>
            <person name="Quail M.A."/>
            <person name="Rabbinowitsch E."/>
            <person name="Rutherford K.M."/>
            <person name="Sanders M."/>
            <person name="Sharp S."/>
            <person name="Simmonds M."/>
            <person name="Stevens K."/>
            <person name="Whitehead S."/>
            <person name="Barrell B.G."/>
            <person name="Spratt B.G."/>
            <person name="Parkhill J."/>
        </authorList>
    </citation>
    <scope>NUCLEOTIDE SEQUENCE [LARGE SCALE GENOMIC DNA]</scope>
    <source>
        <strain>MSSA476</strain>
    </source>
</reference>
<name>Y1170_STAAS</name>
<feature type="chain" id="PRO_0000211879" description="UPF0122 protein SAS1170">
    <location>
        <begin position="1"/>
        <end position="110"/>
    </location>
</feature>
<gene>
    <name type="ordered locus">SAS1170</name>
</gene>
<sequence length="110" mass="13581">MGQNDLVKTLRMNYLFDFYQSLLTNKQRNYLELFYLEDYSLSEIADTFNVSRQAVYDNIRRTGDLVEDYEKKLELYQKFEQRREIYDEMKQHLSNPEQIQRYIQQLEDLE</sequence>
<accession>Q6G9X7</accession>
<proteinExistence type="inferred from homology"/>
<comment type="function">
    <text evidence="1">Might take part in the signal recognition particle (SRP) pathway. This is inferred from the conservation of its genetic proximity to ftsY/ffh. May be a regulatory protein.</text>
</comment>
<comment type="similarity">
    <text evidence="1">Belongs to the UPF0122 family.</text>
</comment>